<dbReference type="EC" id="2.7.1.148" evidence="1"/>
<dbReference type="EMBL" id="AM181176">
    <property type="protein sequence ID" value="CAY47002.1"/>
    <property type="molecule type" value="Genomic_DNA"/>
</dbReference>
<dbReference type="RefSeq" id="WP_012722106.1">
    <property type="nucleotide sequence ID" value="NC_012660.1"/>
</dbReference>
<dbReference type="SMR" id="C3KDC2"/>
<dbReference type="STRING" id="294.SRM1_04803"/>
<dbReference type="PATRIC" id="fig|216595.4.peg.968"/>
<dbReference type="eggNOG" id="COG1947">
    <property type="taxonomic scope" value="Bacteria"/>
</dbReference>
<dbReference type="HOGENOM" id="CLU_053057_3_0_6"/>
<dbReference type="OrthoDB" id="9809438at2"/>
<dbReference type="UniPathway" id="UPA00056">
    <property type="reaction ID" value="UER00094"/>
</dbReference>
<dbReference type="GO" id="GO:0050515">
    <property type="term" value="F:4-(cytidine 5'-diphospho)-2-C-methyl-D-erythritol kinase activity"/>
    <property type="evidence" value="ECO:0007669"/>
    <property type="project" value="UniProtKB-UniRule"/>
</dbReference>
<dbReference type="GO" id="GO:0005524">
    <property type="term" value="F:ATP binding"/>
    <property type="evidence" value="ECO:0007669"/>
    <property type="project" value="UniProtKB-UniRule"/>
</dbReference>
<dbReference type="GO" id="GO:0019288">
    <property type="term" value="P:isopentenyl diphosphate biosynthetic process, methylerythritol 4-phosphate pathway"/>
    <property type="evidence" value="ECO:0007669"/>
    <property type="project" value="UniProtKB-UniRule"/>
</dbReference>
<dbReference type="GO" id="GO:0016114">
    <property type="term" value="P:terpenoid biosynthetic process"/>
    <property type="evidence" value="ECO:0007669"/>
    <property type="project" value="InterPro"/>
</dbReference>
<dbReference type="FunFam" id="3.30.230.10:FF:000022">
    <property type="entry name" value="4-diphosphocytidyl-2-C-methyl-D-erythritol kinase"/>
    <property type="match status" value="1"/>
</dbReference>
<dbReference type="Gene3D" id="3.30.230.10">
    <property type="match status" value="1"/>
</dbReference>
<dbReference type="Gene3D" id="3.30.70.890">
    <property type="entry name" value="GHMP kinase, C-terminal domain"/>
    <property type="match status" value="1"/>
</dbReference>
<dbReference type="HAMAP" id="MF_00061">
    <property type="entry name" value="IspE"/>
    <property type="match status" value="1"/>
</dbReference>
<dbReference type="InterPro" id="IPR013750">
    <property type="entry name" value="GHMP_kinase_C_dom"/>
</dbReference>
<dbReference type="InterPro" id="IPR036554">
    <property type="entry name" value="GHMP_kinase_C_sf"/>
</dbReference>
<dbReference type="InterPro" id="IPR006204">
    <property type="entry name" value="GHMP_kinase_N_dom"/>
</dbReference>
<dbReference type="InterPro" id="IPR004424">
    <property type="entry name" value="IspE"/>
</dbReference>
<dbReference type="InterPro" id="IPR020568">
    <property type="entry name" value="Ribosomal_Su5_D2-typ_SF"/>
</dbReference>
<dbReference type="InterPro" id="IPR014721">
    <property type="entry name" value="Ribsml_uS5_D2-typ_fold_subgr"/>
</dbReference>
<dbReference type="NCBIfam" id="TIGR00154">
    <property type="entry name" value="ispE"/>
    <property type="match status" value="1"/>
</dbReference>
<dbReference type="PANTHER" id="PTHR43527">
    <property type="entry name" value="4-DIPHOSPHOCYTIDYL-2-C-METHYL-D-ERYTHRITOL KINASE, CHLOROPLASTIC"/>
    <property type="match status" value="1"/>
</dbReference>
<dbReference type="PANTHER" id="PTHR43527:SF2">
    <property type="entry name" value="4-DIPHOSPHOCYTIDYL-2-C-METHYL-D-ERYTHRITOL KINASE, CHLOROPLASTIC"/>
    <property type="match status" value="1"/>
</dbReference>
<dbReference type="Pfam" id="PF08544">
    <property type="entry name" value="GHMP_kinases_C"/>
    <property type="match status" value="1"/>
</dbReference>
<dbReference type="Pfam" id="PF00288">
    <property type="entry name" value="GHMP_kinases_N"/>
    <property type="match status" value="1"/>
</dbReference>
<dbReference type="PIRSF" id="PIRSF010376">
    <property type="entry name" value="IspE"/>
    <property type="match status" value="1"/>
</dbReference>
<dbReference type="SUPFAM" id="SSF55060">
    <property type="entry name" value="GHMP Kinase, C-terminal domain"/>
    <property type="match status" value="1"/>
</dbReference>
<dbReference type="SUPFAM" id="SSF54211">
    <property type="entry name" value="Ribosomal protein S5 domain 2-like"/>
    <property type="match status" value="1"/>
</dbReference>
<proteinExistence type="inferred from homology"/>
<gene>
    <name evidence="1" type="primary">ispE</name>
    <name type="ordered locus">PFLU_0733</name>
</gene>
<name>ISPE_PSEFS</name>
<accession>C3KDC2</accession>
<protein>
    <recommendedName>
        <fullName evidence="1">4-diphosphocytidyl-2-C-methyl-D-erythritol kinase</fullName>
        <shortName evidence="1">CMK</shortName>
        <ecNumber evidence="1">2.7.1.148</ecNumber>
    </recommendedName>
    <alternativeName>
        <fullName evidence="1">4-(cytidine-5'-diphospho)-2-C-methyl-D-erythritol kinase</fullName>
    </alternativeName>
</protein>
<reference key="1">
    <citation type="journal article" date="2009" name="Genome Biol.">
        <title>Genomic and genetic analyses of diversity and plant interactions of Pseudomonas fluorescens.</title>
        <authorList>
            <person name="Silby M.W."/>
            <person name="Cerdeno-Tarraga A.M."/>
            <person name="Vernikos G.S."/>
            <person name="Giddens S.R."/>
            <person name="Jackson R.W."/>
            <person name="Preston G.M."/>
            <person name="Zhang X.-X."/>
            <person name="Moon C.D."/>
            <person name="Gehrig S.M."/>
            <person name="Godfrey S.A.C."/>
            <person name="Knight C.G."/>
            <person name="Malone J.G."/>
            <person name="Robinson Z."/>
            <person name="Spiers A.J."/>
            <person name="Harris S."/>
            <person name="Challis G.L."/>
            <person name="Yaxley A.M."/>
            <person name="Harris D."/>
            <person name="Seeger K."/>
            <person name="Murphy L."/>
            <person name="Rutter S."/>
            <person name="Squares R."/>
            <person name="Quail M.A."/>
            <person name="Saunders E."/>
            <person name="Mavromatis K."/>
            <person name="Brettin T.S."/>
            <person name="Bentley S.D."/>
            <person name="Hothersall J."/>
            <person name="Stephens E."/>
            <person name="Thomas C.M."/>
            <person name="Parkhill J."/>
            <person name="Levy S.B."/>
            <person name="Rainey P.B."/>
            <person name="Thomson N.R."/>
        </authorList>
    </citation>
    <scope>NUCLEOTIDE SEQUENCE [LARGE SCALE GENOMIC DNA]</scope>
    <source>
        <strain>SBW25</strain>
    </source>
</reference>
<organism>
    <name type="scientific">Pseudomonas fluorescens (strain SBW25)</name>
    <dbReference type="NCBI Taxonomy" id="216595"/>
    <lineage>
        <taxon>Bacteria</taxon>
        <taxon>Pseudomonadati</taxon>
        <taxon>Pseudomonadota</taxon>
        <taxon>Gammaproteobacteria</taxon>
        <taxon>Pseudomonadales</taxon>
        <taxon>Pseudomonadaceae</taxon>
        <taxon>Pseudomonas</taxon>
    </lineage>
</organism>
<sequence>MSVQTLTLPSPAKLNLMLHILGRREDGYHELQTLFQFLDYGDELTFAVRDDGVIQLHTEFEGVPHDSNLIVKAAKKLQAQSSCPLGIDIWIDKILPMGGGIGGGSSNAATTLLGLNHLWRLGWDDDRLAALGLTLGADVPVFVRGHAAFAEGVGEKLTPEYPEEPWYVVLVPQVSVSTAEIFSDPLLTRNSPPIKVRPVPKGNSRNDCLPVVARRYPEVRNALNLLGKFTEAKLTGTGSCVFGGFPSKAEADKVSALLTETLTGFVAKGSNVSMLHRKLQSLL</sequence>
<feature type="chain" id="PRO_1000202385" description="4-diphosphocytidyl-2-C-methyl-D-erythritol kinase">
    <location>
        <begin position="1"/>
        <end position="283"/>
    </location>
</feature>
<feature type="active site" evidence="1">
    <location>
        <position position="13"/>
    </location>
</feature>
<feature type="active site" evidence="1">
    <location>
        <position position="138"/>
    </location>
</feature>
<feature type="binding site" evidence="1">
    <location>
        <begin position="96"/>
        <end position="106"/>
    </location>
    <ligand>
        <name>ATP</name>
        <dbReference type="ChEBI" id="CHEBI:30616"/>
    </ligand>
</feature>
<comment type="function">
    <text evidence="1">Catalyzes the phosphorylation of the position 2 hydroxy group of 4-diphosphocytidyl-2C-methyl-D-erythritol.</text>
</comment>
<comment type="catalytic activity">
    <reaction evidence="1">
        <text>4-CDP-2-C-methyl-D-erythritol + ATP = 4-CDP-2-C-methyl-D-erythritol 2-phosphate + ADP + H(+)</text>
        <dbReference type="Rhea" id="RHEA:18437"/>
        <dbReference type="ChEBI" id="CHEBI:15378"/>
        <dbReference type="ChEBI" id="CHEBI:30616"/>
        <dbReference type="ChEBI" id="CHEBI:57823"/>
        <dbReference type="ChEBI" id="CHEBI:57919"/>
        <dbReference type="ChEBI" id="CHEBI:456216"/>
        <dbReference type="EC" id="2.7.1.148"/>
    </reaction>
</comment>
<comment type="pathway">
    <text evidence="1">Isoprenoid biosynthesis; isopentenyl diphosphate biosynthesis via DXP pathway; isopentenyl diphosphate from 1-deoxy-D-xylulose 5-phosphate: step 3/6.</text>
</comment>
<comment type="similarity">
    <text evidence="1">Belongs to the GHMP kinase family. IspE subfamily.</text>
</comment>
<keyword id="KW-0067">ATP-binding</keyword>
<keyword id="KW-0414">Isoprene biosynthesis</keyword>
<keyword id="KW-0418">Kinase</keyword>
<keyword id="KW-0547">Nucleotide-binding</keyword>
<keyword id="KW-0808">Transferase</keyword>
<evidence type="ECO:0000255" key="1">
    <source>
        <dbReference type="HAMAP-Rule" id="MF_00061"/>
    </source>
</evidence>